<proteinExistence type="inferred from homology"/>
<feature type="chain" id="PRO_1000201974" description="Small ribosomal subunit protein eS8">
    <location>
        <begin position="1"/>
        <end position="133"/>
    </location>
</feature>
<feature type="region of interest" description="Disordered" evidence="2">
    <location>
        <begin position="1"/>
        <end position="22"/>
    </location>
</feature>
<protein>
    <recommendedName>
        <fullName evidence="1">Small ribosomal subunit protein eS8</fullName>
    </recommendedName>
    <alternativeName>
        <fullName evidence="3">30S ribosomal protein S8e</fullName>
    </alternativeName>
</protein>
<dbReference type="EMBL" id="CP001401">
    <property type="protein sequence ID" value="ACP55921.1"/>
    <property type="molecule type" value="Genomic_DNA"/>
</dbReference>
<dbReference type="RefSeq" id="WP_012714112.1">
    <property type="nucleotide sequence ID" value="NC_012632.1"/>
</dbReference>
<dbReference type="BMRB" id="C3MZT9"/>
<dbReference type="SMR" id="C3MZT9"/>
<dbReference type="KEGG" id="sim:M1627_2054"/>
<dbReference type="HOGENOM" id="CLU_080597_2_1_2"/>
<dbReference type="Proteomes" id="UP000002307">
    <property type="component" value="Chromosome"/>
</dbReference>
<dbReference type="GO" id="GO:1990904">
    <property type="term" value="C:ribonucleoprotein complex"/>
    <property type="evidence" value="ECO:0007669"/>
    <property type="project" value="UniProtKB-KW"/>
</dbReference>
<dbReference type="GO" id="GO:0005840">
    <property type="term" value="C:ribosome"/>
    <property type="evidence" value="ECO:0007669"/>
    <property type="project" value="UniProtKB-KW"/>
</dbReference>
<dbReference type="GO" id="GO:0003735">
    <property type="term" value="F:structural constituent of ribosome"/>
    <property type="evidence" value="ECO:0007669"/>
    <property type="project" value="InterPro"/>
</dbReference>
<dbReference type="GO" id="GO:0006412">
    <property type="term" value="P:translation"/>
    <property type="evidence" value="ECO:0007669"/>
    <property type="project" value="UniProtKB-UniRule"/>
</dbReference>
<dbReference type="CDD" id="cd11382">
    <property type="entry name" value="Ribosomal_S8e"/>
    <property type="match status" value="1"/>
</dbReference>
<dbReference type="FunFam" id="2.40.10.310:FF:000002">
    <property type="entry name" value="30S ribosomal protein S8e"/>
    <property type="match status" value="1"/>
</dbReference>
<dbReference type="Gene3D" id="2.40.10.310">
    <property type="match status" value="1"/>
</dbReference>
<dbReference type="HAMAP" id="MF_00029">
    <property type="entry name" value="Ribosomal_eS8"/>
    <property type="match status" value="1"/>
</dbReference>
<dbReference type="InterPro" id="IPR001047">
    <property type="entry name" value="Ribosomal_eS8"/>
</dbReference>
<dbReference type="InterPro" id="IPR018283">
    <property type="entry name" value="Ribosomal_eS8_CS"/>
</dbReference>
<dbReference type="InterPro" id="IPR020919">
    <property type="entry name" value="Ribosomal_protein_eS8_arc"/>
</dbReference>
<dbReference type="InterPro" id="IPR022309">
    <property type="entry name" value="Ribosomal_Se8/biogenesis_NSA2"/>
</dbReference>
<dbReference type="NCBIfam" id="TIGR00307">
    <property type="entry name" value="eS8"/>
    <property type="match status" value="1"/>
</dbReference>
<dbReference type="PANTHER" id="PTHR10394">
    <property type="entry name" value="40S RIBOSOMAL PROTEIN S8"/>
    <property type="match status" value="1"/>
</dbReference>
<dbReference type="Pfam" id="PF01201">
    <property type="entry name" value="Ribosomal_S8e"/>
    <property type="match status" value="1"/>
</dbReference>
<dbReference type="PROSITE" id="PS01193">
    <property type="entry name" value="RIBOSOMAL_S8E"/>
    <property type="match status" value="1"/>
</dbReference>
<organism>
    <name type="scientific">Saccharolobus islandicus (strain M.16.27)</name>
    <name type="common">Sulfolobus islandicus</name>
    <dbReference type="NCBI Taxonomy" id="427318"/>
    <lineage>
        <taxon>Archaea</taxon>
        <taxon>Thermoproteota</taxon>
        <taxon>Thermoprotei</taxon>
        <taxon>Sulfolobales</taxon>
        <taxon>Sulfolobaceae</taxon>
        <taxon>Saccharolobus</taxon>
    </lineage>
</organism>
<name>RS8E_SACI3</name>
<gene>
    <name evidence="1" type="primary">rps8e</name>
    <name type="ordered locus">M1627_2054</name>
</gene>
<reference key="1">
    <citation type="journal article" date="2009" name="Proc. Natl. Acad. Sci. U.S.A.">
        <title>Biogeography of the Sulfolobus islandicus pan-genome.</title>
        <authorList>
            <person name="Reno M.L."/>
            <person name="Held N.L."/>
            <person name="Fields C.J."/>
            <person name="Burke P.V."/>
            <person name="Whitaker R.J."/>
        </authorList>
    </citation>
    <scope>NUCLEOTIDE SEQUENCE [LARGE SCALE GENOMIC DNA]</scope>
    <source>
        <strain>M.16.27</strain>
    </source>
</reference>
<sequence length="133" mass="14502">MGFYQGPDNRKITGGLKGKHRDKRKYEIGNPSTLTTLSAEDIRIKDRTLGGNFKVRLKYTTTANVLDPATNTAKKVKILEVLETPANKELARRGIIIRGAKIRTEAGLAVVTSRPGQDGVINAVLLKNESQGS</sequence>
<keyword id="KW-0687">Ribonucleoprotein</keyword>
<keyword id="KW-0689">Ribosomal protein</keyword>
<comment type="subunit">
    <text evidence="1">Part of the 30S ribosomal subunit.</text>
</comment>
<comment type="similarity">
    <text evidence="1">Belongs to the eukaryotic ribosomal protein eS8 family.</text>
</comment>
<accession>C3MZT9</accession>
<evidence type="ECO:0000255" key="1">
    <source>
        <dbReference type="HAMAP-Rule" id="MF_00029"/>
    </source>
</evidence>
<evidence type="ECO:0000256" key="2">
    <source>
        <dbReference type="SAM" id="MobiDB-lite"/>
    </source>
</evidence>
<evidence type="ECO:0000305" key="3"/>